<proteinExistence type="evidence at protein level"/>
<feature type="chain" id="PRO_0000169824" description="Inner membrane protein YtfF">
    <location>
        <begin position="1"/>
        <end position="321"/>
    </location>
</feature>
<feature type="topological domain" description="Cytoplasmic" evidence="1">
    <location>
        <begin position="1"/>
        <end position="4"/>
    </location>
</feature>
<feature type="transmembrane region" description="Helical" evidence="1">
    <location>
        <begin position="5"/>
        <end position="25"/>
    </location>
</feature>
<feature type="topological domain" description="Periplasmic" evidence="1">
    <location>
        <begin position="26"/>
        <end position="30"/>
    </location>
</feature>
<feature type="transmembrane region" description="Helical" evidence="1">
    <location>
        <begin position="31"/>
        <end position="51"/>
    </location>
</feature>
<feature type="topological domain" description="Cytoplasmic" evidence="1">
    <location>
        <begin position="52"/>
        <end position="65"/>
    </location>
</feature>
<feature type="transmembrane region" description="Helical" evidence="1">
    <location>
        <begin position="66"/>
        <end position="86"/>
    </location>
</feature>
<feature type="topological domain" description="Periplasmic" evidence="1">
    <location>
        <begin position="87"/>
        <end position="92"/>
    </location>
</feature>
<feature type="transmembrane region" description="Helical" evidence="1">
    <location>
        <begin position="93"/>
        <end position="113"/>
    </location>
</feature>
<feature type="topological domain" description="Cytoplasmic" evidence="1">
    <location>
        <begin position="114"/>
        <end position="120"/>
    </location>
</feature>
<feature type="transmembrane region" description="Helical" evidence="1">
    <location>
        <begin position="121"/>
        <end position="141"/>
    </location>
</feature>
<feature type="topological domain" description="Periplasmic" evidence="1">
    <location>
        <begin position="142"/>
        <end position="154"/>
    </location>
</feature>
<feature type="transmembrane region" description="Helical" evidence="1">
    <location>
        <begin position="155"/>
        <end position="175"/>
    </location>
</feature>
<feature type="topological domain" description="Cytoplasmic" evidence="1">
    <location>
        <begin position="176"/>
        <end position="194"/>
    </location>
</feature>
<feature type="transmembrane region" description="Helical" evidence="1">
    <location>
        <begin position="195"/>
        <end position="215"/>
    </location>
</feature>
<feature type="topological domain" description="Periplasmic" evidence="1">
    <location>
        <begin position="216"/>
        <end position="230"/>
    </location>
</feature>
<feature type="transmembrane region" description="Helical" evidence="1">
    <location>
        <begin position="231"/>
        <end position="251"/>
    </location>
</feature>
<feature type="topological domain" description="Cytoplasmic" evidence="1">
    <location>
        <begin position="252"/>
        <end position="261"/>
    </location>
</feature>
<feature type="transmembrane region" description="Helical" evidence="1">
    <location>
        <begin position="262"/>
        <end position="282"/>
    </location>
</feature>
<feature type="topological domain" description="Periplasmic" evidence="1">
    <location>
        <begin position="283"/>
        <end position="285"/>
    </location>
</feature>
<feature type="transmembrane region" description="Helical" evidence="1">
    <location>
        <begin position="286"/>
        <end position="306"/>
    </location>
</feature>
<feature type="topological domain" description="Cytoplasmic" evidence="1">
    <location>
        <begin position="307"/>
        <end position="321"/>
    </location>
</feature>
<feature type="domain" description="EamA">
    <location>
        <begin position="13"/>
        <end position="141"/>
    </location>
</feature>
<gene>
    <name type="primary">ytfF</name>
    <name type="ordered locus">b4210</name>
    <name type="ordered locus">JW4168</name>
</gene>
<accession>P39314</accession>
<accession>Q2M695</accession>
<protein>
    <recommendedName>
        <fullName>Inner membrane protein YtfF</fullName>
    </recommendedName>
</protein>
<sequence>MISGVLYALLAGLMWGLIFVGPLIVPEYPAMLQSMGRYLALGLIALPIAWLGRVRLRQLARRDWLTALMLTMMGNLIYYFCLASAIQRTGAPVSTMIIGTLPVVIPVFANLLYSQRDGKLAWGKLAPALICIGIGLACVNIAELNHGLPDFDWARYTSGIVLALVSVVCWAWYALRNARWLRENPDKHPMMWATAQALVTLPVSLIGYLVACYWLNTQTPDFSLPFGPRPLVFISLMVAIAVLCSWVGALCWNVASQLLPTVILGPLIVFETLAGLLYTFLLRQQMPPLMTLSGIALLVIGVVIAVRAKPEKPLTESVSES</sequence>
<keyword id="KW-0997">Cell inner membrane</keyword>
<keyword id="KW-1003">Cell membrane</keyword>
<keyword id="KW-0472">Membrane</keyword>
<keyword id="KW-1185">Reference proteome</keyword>
<keyword id="KW-0812">Transmembrane</keyword>
<keyword id="KW-1133">Transmembrane helix</keyword>
<name>YTFF_ECOLI</name>
<reference key="1">
    <citation type="journal article" date="1995" name="Nucleic Acids Res.">
        <title>Analysis of the Escherichia coli genome VI: DNA sequence of the region from 92.8 through 100 minutes.</title>
        <authorList>
            <person name="Burland V.D."/>
            <person name="Plunkett G. III"/>
            <person name="Sofia H.J."/>
            <person name="Daniels D.L."/>
            <person name="Blattner F.R."/>
        </authorList>
    </citation>
    <scope>NUCLEOTIDE SEQUENCE [LARGE SCALE GENOMIC DNA]</scope>
    <source>
        <strain>K12 / MG1655 / ATCC 47076</strain>
    </source>
</reference>
<reference key="2">
    <citation type="journal article" date="1997" name="Science">
        <title>The complete genome sequence of Escherichia coli K-12.</title>
        <authorList>
            <person name="Blattner F.R."/>
            <person name="Plunkett G. III"/>
            <person name="Bloch C.A."/>
            <person name="Perna N.T."/>
            <person name="Burland V."/>
            <person name="Riley M."/>
            <person name="Collado-Vides J."/>
            <person name="Glasner J.D."/>
            <person name="Rode C.K."/>
            <person name="Mayhew G.F."/>
            <person name="Gregor J."/>
            <person name="Davis N.W."/>
            <person name="Kirkpatrick H.A."/>
            <person name="Goeden M.A."/>
            <person name="Rose D.J."/>
            <person name="Mau B."/>
            <person name="Shao Y."/>
        </authorList>
    </citation>
    <scope>NUCLEOTIDE SEQUENCE [LARGE SCALE GENOMIC DNA]</scope>
    <source>
        <strain>K12 / MG1655 / ATCC 47076</strain>
    </source>
</reference>
<reference key="3">
    <citation type="journal article" date="2006" name="Mol. Syst. Biol.">
        <title>Highly accurate genome sequences of Escherichia coli K-12 strains MG1655 and W3110.</title>
        <authorList>
            <person name="Hayashi K."/>
            <person name="Morooka N."/>
            <person name="Yamamoto Y."/>
            <person name="Fujita K."/>
            <person name="Isono K."/>
            <person name="Choi S."/>
            <person name="Ohtsubo E."/>
            <person name="Baba T."/>
            <person name="Wanner B.L."/>
            <person name="Mori H."/>
            <person name="Horiuchi T."/>
        </authorList>
    </citation>
    <scope>NUCLEOTIDE SEQUENCE [LARGE SCALE GENOMIC DNA]</scope>
    <source>
        <strain>K12 / W3110 / ATCC 27325 / DSM 5911</strain>
    </source>
</reference>
<reference key="4">
    <citation type="journal article" date="2005" name="Science">
        <title>Global topology analysis of the Escherichia coli inner membrane proteome.</title>
        <authorList>
            <person name="Daley D.O."/>
            <person name="Rapp M."/>
            <person name="Granseth E."/>
            <person name="Melen K."/>
            <person name="Drew D."/>
            <person name="von Heijne G."/>
        </authorList>
    </citation>
    <scope>TOPOLOGY [LARGE SCALE ANALYSIS]</scope>
    <source>
        <strain>K12 / MG1655 / ATCC 47076</strain>
    </source>
</reference>
<dbReference type="EMBL" id="U14003">
    <property type="protein sequence ID" value="AAA97106.1"/>
    <property type="status" value="ALT_INIT"/>
    <property type="molecule type" value="Genomic_DNA"/>
</dbReference>
<dbReference type="EMBL" id="U00096">
    <property type="protein sequence ID" value="AAC77167.2"/>
    <property type="molecule type" value="Genomic_DNA"/>
</dbReference>
<dbReference type="EMBL" id="AP009048">
    <property type="protein sequence ID" value="BAE78211.1"/>
    <property type="status" value="ALT_INIT"/>
    <property type="molecule type" value="Genomic_DNA"/>
</dbReference>
<dbReference type="PIR" id="S56435">
    <property type="entry name" value="S56435"/>
</dbReference>
<dbReference type="RefSeq" id="NP_418631.2">
    <property type="nucleotide sequence ID" value="NC_000913.3"/>
</dbReference>
<dbReference type="RefSeq" id="WP_001350569.1">
    <property type="nucleotide sequence ID" value="NZ_LN832404.1"/>
</dbReference>
<dbReference type="SMR" id="P39314"/>
<dbReference type="BioGRID" id="4263163">
    <property type="interactions" value="200"/>
</dbReference>
<dbReference type="FunCoup" id="P39314">
    <property type="interactions" value="7"/>
</dbReference>
<dbReference type="STRING" id="511145.b4210"/>
<dbReference type="TCDB" id="2.A.7.3.19">
    <property type="family name" value="the drug/metabolite transporter (dmt) superfamily"/>
</dbReference>
<dbReference type="PaxDb" id="511145-b4210"/>
<dbReference type="EnsemblBacteria" id="AAC77167">
    <property type="protein sequence ID" value="AAC77167"/>
    <property type="gene ID" value="b4210"/>
</dbReference>
<dbReference type="GeneID" id="948732"/>
<dbReference type="KEGG" id="ecj:JW4168"/>
<dbReference type="KEGG" id="eco:b4210"/>
<dbReference type="KEGG" id="ecoc:C3026_22740"/>
<dbReference type="PATRIC" id="fig|1411691.4.peg.2491"/>
<dbReference type="EchoBASE" id="EB2399"/>
<dbReference type="eggNOG" id="COG0697">
    <property type="taxonomic scope" value="Bacteria"/>
</dbReference>
<dbReference type="HOGENOM" id="CLU_058004_0_0_6"/>
<dbReference type="InParanoid" id="P39314"/>
<dbReference type="OMA" id="WYPLRNA"/>
<dbReference type="OrthoDB" id="7216522at2"/>
<dbReference type="PhylomeDB" id="P39314"/>
<dbReference type="BioCyc" id="EcoCyc:G7867-MONOMER"/>
<dbReference type="PRO" id="PR:P39314"/>
<dbReference type="Proteomes" id="UP000000625">
    <property type="component" value="Chromosome"/>
</dbReference>
<dbReference type="GO" id="GO:0005886">
    <property type="term" value="C:plasma membrane"/>
    <property type="evidence" value="ECO:0000314"/>
    <property type="project" value="EcoCyc"/>
</dbReference>
<dbReference type="InterPro" id="IPR051258">
    <property type="entry name" value="Diverse_Substrate_Transporter"/>
</dbReference>
<dbReference type="InterPro" id="IPR000620">
    <property type="entry name" value="EamA_dom"/>
</dbReference>
<dbReference type="PANTHER" id="PTHR42920:SF11">
    <property type="entry name" value="INNER MEMBRANE PROTEIN YTFF"/>
    <property type="match status" value="1"/>
</dbReference>
<dbReference type="PANTHER" id="PTHR42920">
    <property type="entry name" value="OS03G0707200 PROTEIN-RELATED"/>
    <property type="match status" value="1"/>
</dbReference>
<dbReference type="Pfam" id="PF00892">
    <property type="entry name" value="EamA"/>
    <property type="match status" value="1"/>
</dbReference>
<dbReference type="SUPFAM" id="SSF103481">
    <property type="entry name" value="Multidrug resistance efflux transporter EmrE"/>
    <property type="match status" value="1"/>
</dbReference>
<evidence type="ECO:0000255" key="1"/>
<evidence type="ECO:0000305" key="2"/>
<organism>
    <name type="scientific">Escherichia coli (strain K12)</name>
    <dbReference type="NCBI Taxonomy" id="83333"/>
    <lineage>
        <taxon>Bacteria</taxon>
        <taxon>Pseudomonadati</taxon>
        <taxon>Pseudomonadota</taxon>
        <taxon>Gammaproteobacteria</taxon>
        <taxon>Enterobacterales</taxon>
        <taxon>Enterobacteriaceae</taxon>
        <taxon>Escherichia</taxon>
    </lineage>
</organism>
<comment type="subcellular location">
    <subcellularLocation>
        <location>Cell inner membrane</location>
        <topology>Multi-pass membrane protein</topology>
    </subcellularLocation>
</comment>
<comment type="sequence caution" evidence="2">
    <conflict type="erroneous initiation">
        <sequence resource="EMBL-CDS" id="AAA97106"/>
    </conflict>
</comment>
<comment type="sequence caution" evidence="2">
    <conflict type="erroneous initiation">
        <sequence resource="EMBL-CDS" id="BAE78211"/>
    </conflict>
</comment>